<protein>
    <recommendedName>
        <fullName evidence="1">Chromosome partition protein MukB</fullName>
    </recommendedName>
    <alternativeName>
        <fullName evidence="1">Structural maintenance of chromosome-related protein</fullName>
    </alternativeName>
</protein>
<sequence>MIERGKYQSLTMVNWNGFFARTFDIDGLVTTLSGGNGAGKSTTMAAFITALIPDQSLLHFRNTTEAGSSQASRDKGLYGKLQPGACYAALDVVNSRNQRLLFAVKLQQVAGRDKKVDIKPFVIQGLPSHVKPTDVLIESVSATQARVRQINEVKESVAQYEGVQFKSFSSIVDYHAQMFEFGVIPKKLRNSSDRSKFYRLIEASLYGGISSAITRSLRDYLLPQNGGVKKAFQDMESALRENRMTLEAIKTTQADRDLFKHLITESTNYVAADYMRHANERHKKLEQSLSLRSELFSSRETLIEQNRLLNQVQQELEMLVESESALEQDYQGASDHLQLVQNALRQQEKIERYQEDLEELNERLEEQSMVVEEAQERVLMAEEQSTVAENEVDSLKTQLADYQQALDVQQTRALQYQQAVQALEKAKVLLSDSTLTAESAQALVAQLTQSEAEQTQALLALKHKLDMSSAAAQQFENALKLVHSIAGQVERAEASRHAKAAIQQARSAQQVVQNENQWRAQHRDLERSLNQQNQAQALVAEYQKAHQVTLDDEVMFEQERERHHAQLDSLEIALEENRELRSEQRRQEQDLQSDITQLQAIAPKWIAANDALEKLREQSGAELADSQSVMSQMQQVLEQEKQLSQAKDKLAERRSQLESEIERLASPGGSNDPRLKGLADTLGGVLLSEIYDDITIDDAPYFSAMYGPARHAIVVSDLSGIEEKLVELDDCPEDLYIIEGDVDAFDDSSIKAEELEGAVCVRLNDRQMRYSRFPVIPLFGRAAREQRLELLRSEREEVVEKHAKAAFDAQKMQRLFQAFNQFVAEHIQVAFAADPEQALVIARDKRNQLTRTLAELEAKELQMRSQIQNSKQALTMLDKLAPMMAVISDDTIGERFAELEEKIAQLADAKQFLGAHAKAVEQLESQLAVLDADPEQFDALEAQYQSADSQLQALKKQIFALSDLVERRHYFAYADSVDLLSKSSELSEQLKAKLVEAERARSRYRDELKQQQEQMNQYNQVLASLKSSYQAKLETVQEFKQELAEFGVSADEGALERAIRRRDELHERLHTSRSRKSEYERTLTSTELGMKELAKRLKKVQKEYVELRTFVVAAKAGWCSVLRLARENDVERRLHKRELAYLSAGELRSMSDKSLGALRLAVANNDDLRDALRLSEDNARPERKVLFYIAVYQHLRERIRQDIIHTDDPVEAIEEMEVELARLTEELTMRENRLAISSESVASIIKKTIQREQNRIRMLNQGLSNISFGQVKGVRLNVKVRESHEVLLNGLATQQEQHKDLFETARYTFSEAMAKLFQRVNPHIDMGQRSPQVLGEELLDYRNYLELSIEVNRGSDGWLQAESGALSTGEAIGTGQSILLMVVQSWEEESRRLRSKDIVPCRLLFLDEAARLDAKSISTLFELCDRLDMQLLIAAPENISPEKGTTYKLVRKVFKDHEHVHVVGLRGFGQEQKPKSEAQQMIEEFEA</sequence>
<comment type="function">
    <text evidence="1">Plays a central role in chromosome condensation, segregation and cell cycle progression. Functions as a homodimer, which is essential for chromosome partition. Involved in negative DNA supercoiling in vivo, and by this means organize and compact chromosomes. May achieve or facilitate chromosome segregation by condensation DNA from both sides of a centrally located replisome during cell division.</text>
</comment>
<comment type="subunit">
    <text evidence="1">Homodimerization via its hinge domain. Binds to DNA via its C-terminal region. Interacts, and probably forms a ternary complex, with MukE and MukF via its C-terminal region. The complex formation is stimulated by calcium or magnesium. Interacts with tubulin-related protein FtsZ.</text>
</comment>
<comment type="subcellular location">
    <subcellularLocation>
        <location evidence="1">Cytoplasm</location>
        <location evidence="1">Nucleoid</location>
    </subcellularLocation>
    <text evidence="1">Restricted to the nucleoid region.</text>
</comment>
<comment type="domain">
    <text evidence="1">The hinge domain, which separates the large intramolecular coiled coil regions, allows the homodimerization, forming a V-shaped homodimer.</text>
</comment>
<comment type="similarity">
    <text evidence="1">Belongs to the SMC family. MukB subfamily.</text>
</comment>
<evidence type="ECO:0000255" key="1">
    <source>
        <dbReference type="HAMAP-Rule" id="MF_01800"/>
    </source>
</evidence>
<keyword id="KW-0067">ATP-binding</keyword>
<keyword id="KW-0131">Cell cycle</keyword>
<keyword id="KW-0132">Cell division</keyword>
<keyword id="KW-0159">Chromosome partition</keyword>
<keyword id="KW-0175">Coiled coil</keyword>
<keyword id="KW-0963">Cytoplasm</keyword>
<keyword id="KW-0226">DNA condensation</keyword>
<keyword id="KW-0238">DNA-binding</keyword>
<keyword id="KW-0547">Nucleotide-binding</keyword>
<reference key="1">
    <citation type="submission" date="2002-12" db="EMBL/GenBank/DDBJ databases">
        <title>Complete genome sequence of Vibrio vulnificus CMCP6.</title>
        <authorList>
            <person name="Rhee J.H."/>
            <person name="Kim S.Y."/>
            <person name="Chung S.S."/>
            <person name="Kim J.J."/>
            <person name="Moon Y.H."/>
            <person name="Jeong H."/>
            <person name="Choy H.E."/>
        </authorList>
    </citation>
    <scope>NUCLEOTIDE SEQUENCE [LARGE SCALE GENOMIC DNA]</scope>
    <source>
        <strain>CMCP6</strain>
    </source>
</reference>
<gene>
    <name evidence="1" type="primary">mukB</name>
    <name type="ordered locus">VV1_2145</name>
</gene>
<feature type="chain" id="PRO_0000068231" description="Chromosome partition protein MukB">
    <location>
        <begin position="1"/>
        <end position="1487"/>
    </location>
</feature>
<feature type="region of interest" description="Flexible hinge" evidence="1">
    <location>
        <begin position="667"/>
        <end position="784"/>
    </location>
</feature>
<feature type="coiled-coil region" evidence="1">
    <location>
        <begin position="297"/>
        <end position="426"/>
    </location>
</feature>
<feature type="coiled-coil region" evidence="1">
    <location>
        <begin position="460"/>
        <end position="666"/>
    </location>
</feature>
<feature type="coiled-coil region" evidence="1">
    <location>
        <begin position="781"/>
        <end position="806"/>
    </location>
</feature>
<feature type="coiled-coil region" evidence="1">
    <location>
        <begin position="836"/>
        <end position="1111"/>
    </location>
</feature>
<feature type="coiled-coil region" evidence="1">
    <location>
        <begin position="1210"/>
        <end position="1266"/>
    </location>
</feature>
<feature type="binding site" evidence="1">
    <location>
        <begin position="34"/>
        <end position="41"/>
    </location>
    <ligand>
        <name>ATP</name>
        <dbReference type="ChEBI" id="CHEBI:30616"/>
    </ligand>
</feature>
<name>MUKB_VIBVU</name>
<dbReference type="EMBL" id="AE016795">
    <property type="protein sequence ID" value="AAO10530.1"/>
    <property type="molecule type" value="Genomic_DNA"/>
</dbReference>
<dbReference type="RefSeq" id="WP_011080024.1">
    <property type="nucleotide sequence ID" value="NC_004459.3"/>
</dbReference>
<dbReference type="SMR" id="Q8DAP8"/>
<dbReference type="KEGG" id="vvu:VV1_2145"/>
<dbReference type="HOGENOM" id="CLU_004430_0_0_6"/>
<dbReference type="Proteomes" id="UP000002275">
    <property type="component" value="Chromosome 1"/>
</dbReference>
<dbReference type="GO" id="GO:0005737">
    <property type="term" value="C:cytoplasm"/>
    <property type="evidence" value="ECO:0007669"/>
    <property type="project" value="UniProtKB-UniRule"/>
</dbReference>
<dbReference type="GO" id="GO:0009295">
    <property type="term" value="C:nucleoid"/>
    <property type="evidence" value="ECO:0007669"/>
    <property type="project" value="UniProtKB-SubCell"/>
</dbReference>
<dbReference type="GO" id="GO:0005524">
    <property type="term" value="F:ATP binding"/>
    <property type="evidence" value="ECO:0007669"/>
    <property type="project" value="UniProtKB-UniRule"/>
</dbReference>
<dbReference type="GO" id="GO:0003677">
    <property type="term" value="F:DNA binding"/>
    <property type="evidence" value="ECO:0007669"/>
    <property type="project" value="UniProtKB-UniRule"/>
</dbReference>
<dbReference type="GO" id="GO:0051301">
    <property type="term" value="P:cell division"/>
    <property type="evidence" value="ECO:0007669"/>
    <property type="project" value="UniProtKB-KW"/>
</dbReference>
<dbReference type="GO" id="GO:0030261">
    <property type="term" value="P:chromosome condensation"/>
    <property type="evidence" value="ECO:0007669"/>
    <property type="project" value="UniProtKB-KW"/>
</dbReference>
<dbReference type="GO" id="GO:0007059">
    <property type="term" value="P:chromosome segregation"/>
    <property type="evidence" value="ECO:0007669"/>
    <property type="project" value="UniProtKB-UniRule"/>
</dbReference>
<dbReference type="GO" id="GO:0006260">
    <property type="term" value="P:DNA replication"/>
    <property type="evidence" value="ECO:0007669"/>
    <property type="project" value="UniProtKB-UniRule"/>
</dbReference>
<dbReference type="FunFam" id="3.40.1140.10:FF:000002">
    <property type="entry name" value="Chromosome partition protein MukB"/>
    <property type="match status" value="1"/>
</dbReference>
<dbReference type="Gene3D" id="1.20.58.850">
    <property type="match status" value="1"/>
</dbReference>
<dbReference type="Gene3D" id="3.40.1140.10">
    <property type="match status" value="2"/>
</dbReference>
<dbReference type="Gene3D" id="1.20.5.420">
    <property type="entry name" value="Immunoglobulin FC, subunit C"/>
    <property type="match status" value="1"/>
</dbReference>
<dbReference type="Gene3D" id="3.30.70.3500">
    <property type="entry name" value="MukB, hinge domain"/>
    <property type="match status" value="1"/>
</dbReference>
<dbReference type="HAMAP" id="MF_01800">
    <property type="entry name" value="MukB"/>
    <property type="match status" value="1"/>
</dbReference>
<dbReference type="InterPro" id="IPR012090">
    <property type="entry name" value="MukB"/>
</dbReference>
<dbReference type="InterPro" id="IPR050308">
    <property type="entry name" value="MukB/SMC"/>
</dbReference>
<dbReference type="InterPro" id="IPR032520">
    <property type="entry name" value="MukB_hinge"/>
</dbReference>
<dbReference type="InterPro" id="IPR042501">
    <property type="entry name" value="MukB_hinge_sf"/>
</dbReference>
<dbReference type="InterPro" id="IPR007406">
    <property type="entry name" value="MukB_N_dom"/>
</dbReference>
<dbReference type="InterPro" id="IPR027417">
    <property type="entry name" value="P-loop_NTPase"/>
</dbReference>
<dbReference type="NCBIfam" id="NF003422">
    <property type="entry name" value="PRK04863.1"/>
    <property type="match status" value="1"/>
</dbReference>
<dbReference type="PANTHER" id="PTHR42963">
    <property type="entry name" value="CHROMOSOME PARTITION PROTEIN MUKB"/>
    <property type="match status" value="1"/>
</dbReference>
<dbReference type="PANTHER" id="PTHR42963:SF1">
    <property type="entry name" value="DUF4476 DOMAIN-CONTAINING PROTEIN"/>
    <property type="match status" value="1"/>
</dbReference>
<dbReference type="Pfam" id="PF04310">
    <property type="entry name" value="MukB"/>
    <property type="match status" value="1"/>
</dbReference>
<dbReference type="Pfam" id="PF16330">
    <property type="entry name" value="MukB_hinge"/>
    <property type="match status" value="1"/>
</dbReference>
<dbReference type="Pfam" id="PF13558">
    <property type="entry name" value="SbcC_Walker_B"/>
    <property type="match status" value="1"/>
</dbReference>
<dbReference type="PIRSF" id="PIRSF005246">
    <property type="entry name" value="MukB"/>
    <property type="match status" value="1"/>
</dbReference>
<dbReference type="SUPFAM" id="SSF52540">
    <property type="entry name" value="P-loop containing nucleoside triphosphate hydrolases"/>
    <property type="match status" value="2"/>
</dbReference>
<organism>
    <name type="scientific">Vibrio vulnificus (strain CMCP6)</name>
    <dbReference type="NCBI Taxonomy" id="216895"/>
    <lineage>
        <taxon>Bacteria</taxon>
        <taxon>Pseudomonadati</taxon>
        <taxon>Pseudomonadota</taxon>
        <taxon>Gammaproteobacteria</taxon>
        <taxon>Vibrionales</taxon>
        <taxon>Vibrionaceae</taxon>
        <taxon>Vibrio</taxon>
    </lineage>
</organism>
<accession>Q8DAP8</accession>
<proteinExistence type="inferred from homology"/>